<accession>K2RQZ2</accession>
<reference key="1">
    <citation type="journal article" date="2012" name="BMC Genomics">
        <title>Tools to kill: Genome of one of the most destructive plant pathogenic fungi Macrophomina phaseolina.</title>
        <authorList>
            <person name="Islam M.S."/>
            <person name="Haque M.S."/>
            <person name="Islam M.M."/>
            <person name="Emdad E.M."/>
            <person name="Halim A."/>
            <person name="Hossen Q.M.M."/>
            <person name="Hossain M.Z."/>
            <person name="Ahmed B."/>
            <person name="Rahim S."/>
            <person name="Rahman M.S."/>
            <person name="Alam M.M."/>
            <person name="Hou S."/>
            <person name="Wan X."/>
            <person name="Saito J.A."/>
            <person name="Alam M."/>
        </authorList>
    </citation>
    <scope>NUCLEOTIDE SEQUENCE [LARGE SCALE GENOMIC DNA]</scope>
    <source>
        <strain>MS6</strain>
    </source>
</reference>
<reference key="2">
    <citation type="journal article" date="2022" name="Front. Microbiol.">
        <title>Discovery and biosynthesis of macrophasetins from the plant pathogen fungus Macrophomina phaseolina.</title>
        <authorList>
            <person name="Yu C."/>
            <person name="Chen L."/>
            <person name="Gao Y.L."/>
            <person name="Liu J."/>
            <person name="Li P.L."/>
            <person name="Zhang M.L."/>
            <person name="Li Q."/>
            <person name="Zhang H.D."/>
            <person name="Tang M.C."/>
            <person name="Li L."/>
        </authorList>
    </citation>
    <scope>FUNCTION</scope>
    <scope>CATALYTIC ACTIVITY</scope>
    <scope>PATHWAY</scope>
</reference>
<protein>
    <recommendedName>
        <fullName evidence="3">Cytochrome P450 monooxygenase mpsF</fullName>
        <ecNumber evidence="2">1.-.-.-</ecNumber>
    </recommendedName>
    <alternativeName>
        <fullName evidence="3">Macrophasetins biosynthesis cluster protein F</fullName>
    </alternativeName>
</protein>
<comment type="function">
    <text evidence="2">Cytochrome P450 monooxygenase; part of the gene cluster that mediates the biosynthesis of macrophasetins, 3-decalinoyltetramic acids (DTAs) which feature a tetramate (pyrrolidine-2,4-dione) unit connected to a decalin fragment and that have potent bioactivities (PubMed:36452919). The PKS-NRPS mpsA together with its associated enoylreductase partner mpsG incorporate one unit of acetyl-CoA, seven units of malonyl-CoA, and one unit of L-alanine to assemble the linear tetramic acid intermediate corresponding to the backbone of macrophasetins (PubMed:36452919). Without the Diels-Alderase mpsD, the mpsA/G product can undergo the non-enzymatic intramolecular Diels-Alder (IMDA) reaction to generate both macrophasetin A and macrophasetin B (PubMed:36452919). Catalyzed by mpsD, the linear tetramic acid intermediate is thoroughly converted to macrophasetin A via the endo-IMDA reaction in a regioselective and stereoselective manner (PubMed:36452919). Finally, the cytochrome P450 monooxygenase mpsF catalyzes the hydroxylation at C20 to yield the end product macrophasetin C (PubMed:36452919).</text>
</comment>
<comment type="cofactor">
    <cofactor evidence="1">
        <name>heme</name>
        <dbReference type="ChEBI" id="CHEBI:30413"/>
    </cofactor>
</comment>
<comment type="pathway">
    <text evidence="2">Secondary metabolite biosynthesis.</text>
</comment>
<comment type="similarity">
    <text evidence="4">Belongs to the cytochrome P450 family.</text>
</comment>
<sequence length="410" mass="46900">MISVSDKNEVKRIIHTEDWPKSELIYGNFRQNPARPTLIAFTDKKAYAERKRLISGWFGLRYIRSLQPLMQQCINESIASIERAIDTAGGIVDMQNLCTGTAVDIIGTTIFGQSFDVVKNGSHPLPDYLRKMLKASGLLLFMPWIRSIPFRPTRPAYIDRFTLDIMEKRRATAKSAPRQDLLQKLVEQLDDAAGSKFTPFDVQGEVTIMLVAGTETTANSELFTLLMLVRHPDKLRRVYAEVDAWYPPGDLATPVDCEYSLQGMTYLQACEDEAMRLVPAQATGSPRESRRDEVVLGYRVPAGTTVFPTTQGVHHDESVWKDASEYVPERWLEIYEKGKVTEQHFWPFSAGSRVCIGKHFALQEMHLMLVNLLRRFEFEYVPGQPETTVFRVAQHMEAPKYVMKVRRRKF</sequence>
<proteinExistence type="evidence at protein level"/>
<gene>
    <name evidence="3" type="primary">mpsF</name>
    <name type="ORF">MPH_07629</name>
</gene>
<keyword id="KW-0349">Heme</keyword>
<keyword id="KW-0408">Iron</keyword>
<keyword id="KW-0479">Metal-binding</keyword>
<keyword id="KW-0503">Monooxygenase</keyword>
<keyword id="KW-0560">Oxidoreductase</keyword>
<keyword id="KW-1185">Reference proteome</keyword>
<evidence type="ECO:0000250" key="1">
    <source>
        <dbReference type="UniProtKB" id="P04798"/>
    </source>
</evidence>
<evidence type="ECO:0000269" key="2">
    <source>
    </source>
</evidence>
<evidence type="ECO:0000303" key="3">
    <source>
    </source>
</evidence>
<evidence type="ECO:0000305" key="4"/>
<feature type="chain" id="PRO_0000457827" description="Cytochrome P450 monooxygenase mpsF">
    <location>
        <begin position="1"/>
        <end position="410"/>
    </location>
</feature>
<feature type="binding site" description="axial binding residue" evidence="1">
    <location>
        <position position="355"/>
    </location>
    <ligand>
        <name>heme</name>
        <dbReference type="ChEBI" id="CHEBI:30413"/>
    </ligand>
    <ligandPart>
        <name>Fe</name>
        <dbReference type="ChEBI" id="CHEBI:18248"/>
    </ligandPart>
</feature>
<name>MPSF_MACPH</name>
<organism>
    <name type="scientific">Macrophomina phaseolina (strain MS6)</name>
    <name type="common">Charcoal rot fungus</name>
    <dbReference type="NCBI Taxonomy" id="1126212"/>
    <lineage>
        <taxon>Eukaryota</taxon>
        <taxon>Fungi</taxon>
        <taxon>Dikarya</taxon>
        <taxon>Ascomycota</taxon>
        <taxon>Pezizomycotina</taxon>
        <taxon>Dothideomycetes</taxon>
        <taxon>Dothideomycetes incertae sedis</taxon>
        <taxon>Botryosphaeriales</taxon>
        <taxon>Botryosphaeriaceae</taxon>
        <taxon>Macrophomina</taxon>
    </lineage>
</organism>
<dbReference type="EC" id="1.-.-.-" evidence="2"/>
<dbReference type="EMBL" id="AHHD01000324">
    <property type="protein sequence ID" value="EKG15182.1"/>
    <property type="molecule type" value="Genomic_DNA"/>
</dbReference>
<dbReference type="SMR" id="K2RQZ2"/>
<dbReference type="STRING" id="1126212.K2RQZ2"/>
<dbReference type="VEuPathDB" id="FungiDB:MPH_07629"/>
<dbReference type="eggNOG" id="KOG0158">
    <property type="taxonomic scope" value="Eukaryota"/>
</dbReference>
<dbReference type="HOGENOM" id="CLU_001570_4_1_1"/>
<dbReference type="InParanoid" id="K2RQZ2"/>
<dbReference type="OrthoDB" id="655030at2759"/>
<dbReference type="Proteomes" id="UP000007129">
    <property type="component" value="Unassembled WGS sequence"/>
</dbReference>
<dbReference type="GO" id="GO:0020037">
    <property type="term" value="F:heme binding"/>
    <property type="evidence" value="ECO:0007669"/>
    <property type="project" value="InterPro"/>
</dbReference>
<dbReference type="GO" id="GO:0005506">
    <property type="term" value="F:iron ion binding"/>
    <property type="evidence" value="ECO:0007669"/>
    <property type="project" value="InterPro"/>
</dbReference>
<dbReference type="GO" id="GO:0004497">
    <property type="term" value="F:monooxygenase activity"/>
    <property type="evidence" value="ECO:0007669"/>
    <property type="project" value="UniProtKB-KW"/>
</dbReference>
<dbReference type="GO" id="GO:0016705">
    <property type="term" value="F:oxidoreductase activity, acting on paired donors, with incorporation or reduction of molecular oxygen"/>
    <property type="evidence" value="ECO:0007669"/>
    <property type="project" value="InterPro"/>
</dbReference>
<dbReference type="Gene3D" id="1.10.630.10">
    <property type="entry name" value="Cytochrome P450"/>
    <property type="match status" value="1"/>
</dbReference>
<dbReference type="InterPro" id="IPR001128">
    <property type="entry name" value="Cyt_P450"/>
</dbReference>
<dbReference type="InterPro" id="IPR017972">
    <property type="entry name" value="Cyt_P450_CS"/>
</dbReference>
<dbReference type="InterPro" id="IPR002401">
    <property type="entry name" value="Cyt_P450_E_grp-I"/>
</dbReference>
<dbReference type="InterPro" id="IPR036396">
    <property type="entry name" value="Cyt_P450_sf"/>
</dbReference>
<dbReference type="InterPro" id="IPR050121">
    <property type="entry name" value="Cytochrome_P450_monoxygenase"/>
</dbReference>
<dbReference type="PANTHER" id="PTHR24305">
    <property type="entry name" value="CYTOCHROME P450"/>
    <property type="match status" value="1"/>
</dbReference>
<dbReference type="PANTHER" id="PTHR24305:SF166">
    <property type="entry name" value="CYTOCHROME P450 12A4, MITOCHONDRIAL-RELATED"/>
    <property type="match status" value="1"/>
</dbReference>
<dbReference type="Pfam" id="PF00067">
    <property type="entry name" value="p450"/>
    <property type="match status" value="1"/>
</dbReference>
<dbReference type="PRINTS" id="PR00463">
    <property type="entry name" value="EP450I"/>
</dbReference>
<dbReference type="PRINTS" id="PR00385">
    <property type="entry name" value="P450"/>
</dbReference>
<dbReference type="SUPFAM" id="SSF48264">
    <property type="entry name" value="Cytochrome P450"/>
    <property type="match status" value="1"/>
</dbReference>
<dbReference type="PROSITE" id="PS00086">
    <property type="entry name" value="CYTOCHROME_P450"/>
    <property type="match status" value="1"/>
</dbReference>